<accession>Q2KJE0</accession>
<name>TAXB1_BOVIN</name>
<proteinExistence type="evidence at transcript level"/>
<reference key="1">
    <citation type="submission" date="2005-09" db="EMBL/GenBank/DDBJ databases">
        <authorList>
            <consortium name="NIH - Mammalian Gene Collection (MGC) project"/>
        </authorList>
    </citation>
    <scope>NUCLEOTIDE SEQUENCE [LARGE SCALE MRNA]</scope>
    <source>
        <strain>Hereford</strain>
        <tissue>Rumen reticulum</tissue>
    </source>
</reference>
<organism>
    <name type="scientific">Bos taurus</name>
    <name type="common">Bovine</name>
    <dbReference type="NCBI Taxonomy" id="9913"/>
    <lineage>
        <taxon>Eukaryota</taxon>
        <taxon>Metazoa</taxon>
        <taxon>Chordata</taxon>
        <taxon>Craniata</taxon>
        <taxon>Vertebrata</taxon>
        <taxon>Euteleostomi</taxon>
        <taxon>Mammalia</taxon>
        <taxon>Eutheria</taxon>
        <taxon>Laurasiatheria</taxon>
        <taxon>Artiodactyla</taxon>
        <taxon>Ruminantia</taxon>
        <taxon>Pecora</taxon>
        <taxon>Bovidae</taxon>
        <taxon>Bovinae</taxon>
        <taxon>Bos</taxon>
    </lineage>
</organism>
<keyword id="KW-0053">Apoptosis</keyword>
<keyword id="KW-0175">Coiled coil</keyword>
<keyword id="KW-0963">Cytoplasm</keyword>
<keyword id="KW-0968">Cytoplasmic vesicle</keyword>
<keyword id="KW-0479">Metal-binding</keyword>
<keyword id="KW-0496">Mitochondrion</keyword>
<keyword id="KW-0597">Phosphoprotein</keyword>
<keyword id="KW-1185">Reference proteome</keyword>
<keyword id="KW-0677">Repeat</keyword>
<keyword id="KW-0862">Zinc</keyword>
<keyword id="KW-0863">Zinc-finger</keyword>
<comment type="function">
    <text evidence="3">Ubiquitin-binding adapter that participates in inflammatory, antiviral and innate immune processes as well as selective autophagy regulation. Plays a key role in the negative regulation of NF-kappa-B and IRF3 signalings by acting as an adapter for the ubiquitin-editing enzyme A20/TNFAIP3 to bind and inactivate its substrates. Disrupts the interactions between the E3 ubiquitin ligase TRAF3 and TBK1/IKBKE to attenuate 'Lys63'-linked polyubiquitination of TBK1 and thereby IFN-beta production. Also recruits A20/TNFAIP3 to ubiquitinated signaling proteins TRAF6 and RIPK1, leading to their deubiquitination and disruption of IL-1 and TNF-induced NF-kappa-B signaling pathways. Inhibits virus-induced apoptosis by inducing the 'Lys-48'-linked polyubiquitination and degradation of MAVS via recruitment of the E3 ligase ITCH, thereby attenuating MAVS-mediated apoptosis signaling. As a macroautophagy/autophagy receptor, facilitates the xenophagic clearance of pathogenic bacteria such as Salmonella typhimurium and Mycobacterium tuberculosis. Upon NBR1 recruitment to the SQSTM1-ubiquitin condensates, acts as the major recruiter of RB1CC1 to these ubiquitin condensates to promote their autophagic degradation.</text>
</comment>
<comment type="subunit">
    <text evidence="3">Homooligomer. Interacts with TNFAIP3. Interacts with STARD13. Interacts with MYO6. Interacts with TOM1; the interaction is indirect and is mediated by MYO6, which acts as a bridge between TOM1 and TAX1BP1. Interacts with MAVS; this interaction induces MAVS polyubiquitination. Interacts with TNIP1. Interacts with TRAF6; this interaction mediates deubiquitination of TRAF6 and inhibition of NF-kappa-B activation. Interacts with RIPK1; this interaction negatively regulates RIPK1 ubiquitination. Interacts with NBR1. Interacts with TBK1. Interacts with RB1CC1. Interacts with SQSTM1. Interacts with AZI2.</text>
</comment>
<comment type="subcellular location">
    <subcellularLocation>
        <location evidence="3">Cytoplasm</location>
    </subcellularLocation>
    <subcellularLocation>
        <location evidence="3">Mitochondrion</location>
    </subcellularLocation>
    <subcellularLocation>
        <location evidence="3">Preautophagosomal structure</location>
    </subcellularLocation>
    <subcellularLocation>
        <location evidence="3">Cytoplasmic vesicle</location>
        <location evidence="3">Autophagosome</location>
    </subcellularLocation>
</comment>
<comment type="domain">
    <text evidence="3">The C-terminal UBZ-type zinc fingers function as ubiquitin-binding domains.</text>
</comment>
<comment type="PTM">
    <text evidence="1">Phosphorylated in the C-terminal region by CHUK/IKKA leading to NF-kappa-B signaling down-regulation.</text>
</comment>
<evidence type="ECO:0000250" key="1"/>
<evidence type="ECO:0000250" key="2">
    <source>
        <dbReference type="UniProtKB" id="Q3UKC1"/>
    </source>
</evidence>
<evidence type="ECO:0000250" key="3">
    <source>
        <dbReference type="UniProtKB" id="Q86VP1"/>
    </source>
</evidence>
<evidence type="ECO:0000255" key="4"/>
<evidence type="ECO:0000255" key="5">
    <source>
        <dbReference type="PROSITE-ProRule" id="PRU01253"/>
    </source>
</evidence>
<evidence type="ECO:0000256" key="6">
    <source>
        <dbReference type="SAM" id="MobiDB-lite"/>
    </source>
</evidence>
<feature type="chain" id="PRO_0000234553" description="Tax1-binding protein 1 homolog">
    <location>
        <begin position="1"/>
        <end position="817"/>
    </location>
</feature>
<feature type="zinc finger region" description="UBZ1-type 1" evidence="5">
    <location>
        <begin position="755"/>
        <end position="781"/>
    </location>
</feature>
<feature type="zinc finger region" description="UBZ1-type 2" evidence="5">
    <location>
        <begin position="782"/>
        <end position="808"/>
    </location>
</feature>
<feature type="region of interest" description="Oligomerization" evidence="1">
    <location>
        <begin position="320"/>
        <end position="420"/>
    </location>
</feature>
<feature type="region of interest" description="Disordered" evidence="6">
    <location>
        <begin position="609"/>
        <end position="685"/>
    </location>
</feature>
<feature type="region of interest" description="Disordered" evidence="6">
    <location>
        <begin position="704"/>
        <end position="742"/>
    </location>
</feature>
<feature type="coiled-coil region" evidence="4">
    <location>
        <begin position="144"/>
        <end position="628"/>
    </location>
</feature>
<feature type="compositionally biased region" description="Basic and acidic residues" evidence="6">
    <location>
        <begin position="609"/>
        <end position="627"/>
    </location>
</feature>
<feature type="compositionally biased region" description="Polar residues" evidence="6">
    <location>
        <begin position="628"/>
        <end position="643"/>
    </location>
</feature>
<feature type="binding site" evidence="5">
    <location>
        <position position="758"/>
    </location>
    <ligand>
        <name>Zn(2+)</name>
        <dbReference type="ChEBI" id="CHEBI:29105"/>
        <label>1</label>
    </ligand>
</feature>
<feature type="binding site" evidence="5">
    <location>
        <position position="761"/>
    </location>
    <ligand>
        <name>Zn(2+)</name>
        <dbReference type="ChEBI" id="CHEBI:29105"/>
        <label>1</label>
    </ligand>
</feature>
<feature type="binding site" evidence="5">
    <location>
        <position position="777"/>
    </location>
    <ligand>
        <name>Zn(2+)</name>
        <dbReference type="ChEBI" id="CHEBI:29105"/>
        <label>1</label>
    </ligand>
</feature>
<feature type="binding site" evidence="5">
    <location>
        <position position="781"/>
    </location>
    <ligand>
        <name>Zn(2+)</name>
        <dbReference type="ChEBI" id="CHEBI:29105"/>
        <label>1</label>
    </ligand>
</feature>
<feature type="binding site" evidence="5">
    <location>
        <position position="785"/>
    </location>
    <ligand>
        <name>Zn(2+)</name>
        <dbReference type="ChEBI" id="CHEBI:29105"/>
        <label>2</label>
    </ligand>
</feature>
<feature type="binding site" evidence="5">
    <location>
        <position position="788"/>
    </location>
    <ligand>
        <name>Zn(2+)</name>
        <dbReference type="ChEBI" id="CHEBI:29105"/>
        <label>2</label>
    </ligand>
</feature>
<feature type="binding site" evidence="5">
    <location>
        <position position="804"/>
    </location>
    <ligand>
        <name>Zn(2+)</name>
        <dbReference type="ChEBI" id="CHEBI:29105"/>
        <label>2</label>
    </ligand>
</feature>
<feature type="binding site" evidence="5">
    <location>
        <position position="808"/>
    </location>
    <ligand>
        <name>Zn(2+)</name>
        <dbReference type="ChEBI" id="CHEBI:29105"/>
        <label>2</label>
    </ligand>
</feature>
<feature type="modified residue" description="Phosphoserine" evidence="2">
    <location>
        <position position="124"/>
    </location>
</feature>
<feature type="modified residue" description="Phosphoserine" evidence="3">
    <location>
        <position position="138"/>
    </location>
</feature>
<feature type="modified residue" description="Phosphoserine; by IKKA" evidence="3">
    <location>
        <position position="617"/>
    </location>
</feature>
<feature type="modified residue" description="Phosphoserine" evidence="2">
    <location>
        <position position="633"/>
    </location>
</feature>
<feature type="modified residue" description="Phosphoserine; by IKKA" evidence="3">
    <location>
        <position position="694"/>
    </location>
</feature>
<protein>
    <recommendedName>
        <fullName>Tax1-binding protein 1 homolog</fullName>
    </recommendedName>
</protein>
<gene>
    <name type="primary">TAX1BP1</name>
</gene>
<sequence length="817" mass="94059">MTSFQEVPLQTSNFAHVIFQNVAKSYLPNAHLECHYTLTPYIHPHPKDWVGIFKVGWSTARDYYTFLWSPMPEHYVEGSAVNCELAFQGYYLPNDDGEFYQFCYVTHKGEIRGASTPFQFRAASPVEELLTMEDEGNSDMLVVTTKAGLLELKIEKTMKEKEELLKLIAVLEKETTQLREQVGRMERELNHEKERGDQLQAEQKALTKVSQSLKMENEEFKKRYNDVTSKALQLEEDIVSVTHKAIEKETELDSLKDKLKKAQCEREQLECQLKTEKDEKELYKVHLKNTEIENTKLVSEVQTLKNLDGNKENMITHFKEEISRLQFSLAEKENLQRTFLLTTSSKEDTFILKEQLRKAEEQIQATRQEAVFLAKELSDAVNVRDKTMADLHTAHLENEKVKKQLTDALAELKLSAVNKDQEKTDTLEHELRREVEDLKLRLQMAADHYKEKFKECQRLQKQINKLSDQSANSNSVFTKKIGSQQKVNDASINTDPAATASTVDVKPLPSTAETDFDNLTKGQVSEMTKEIADKTEKYNKCKQLLQDEKTKCNKYADELAKMELKWKEQVKIAENIKLELAEVVDNYKLQLAEKEKEISGLTSYWENLSREKEHKRSVENQAERKLEGQNSQSPHQISQCLKTSSEKSGHVPAVSNTQPVLQYGNPYATPETRDGADGAFYPDEIQRPPVRVPSWGLEDNVVCSQPARNLSRPDGLEDPEDSKEDEKVPTAPDPPSQHLRGHGTGFCFDPSFDVQKKCPLCELMFPPNYDQSKFEEHVESHWKVCPMCSEQFPPDYDQQVFERHVQTHFDQNVLNFD</sequence>
<dbReference type="EMBL" id="BC105389">
    <property type="protein sequence ID" value="AAI05390.1"/>
    <property type="molecule type" value="mRNA"/>
</dbReference>
<dbReference type="RefSeq" id="NP_001039874.1">
    <property type="nucleotide sequence ID" value="NM_001046409.2"/>
</dbReference>
<dbReference type="RefSeq" id="XP_005205596.1">
    <property type="nucleotide sequence ID" value="XM_005205539.5"/>
</dbReference>
<dbReference type="RefSeq" id="XP_059741643.1">
    <property type="nucleotide sequence ID" value="XM_059885660.1"/>
</dbReference>
<dbReference type="SMR" id="Q2KJE0"/>
<dbReference type="FunCoup" id="Q2KJE0">
    <property type="interactions" value="2602"/>
</dbReference>
<dbReference type="STRING" id="9913.ENSBTAP00000033573"/>
<dbReference type="PaxDb" id="9913-ENSBTAP00000033573"/>
<dbReference type="Ensembl" id="ENSBTAT00000033663.4">
    <property type="protein sequence ID" value="ENSBTAP00000033573.3"/>
    <property type="gene ID" value="ENSBTAG00000019020.7"/>
</dbReference>
<dbReference type="GeneID" id="535589"/>
<dbReference type="KEGG" id="bta:535589"/>
<dbReference type="CTD" id="8887"/>
<dbReference type="VEuPathDB" id="HostDB:ENSBTAG00000019020"/>
<dbReference type="VGNC" id="VGNC:35619">
    <property type="gene designation" value="TAX1BP1"/>
</dbReference>
<dbReference type="eggNOG" id="ENOG502QQ1D">
    <property type="taxonomic scope" value="Eukaryota"/>
</dbReference>
<dbReference type="GeneTree" id="ENSGT00950000183025"/>
<dbReference type="HOGENOM" id="CLU_021315_1_0_1"/>
<dbReference type="InParanoid" id="Q2KJE0"/>
<dbReference type="OMA" id="NKTSGDQ"/>
<dbReference type="OrthoDB" id="10015001at2759"/>
<dbReference type="TreeFam" id="TF329501"/>
<dbReference type="Reactome" id="R-BTA-5357905">
    <property type="pathway name" value="Regulation of TNFR1 signaling"/>
</dbReference>
<dbReference type="Reactome" id="R-BTA-936440">
    <property type="pathway name" value="Negative regulators of DDX58/IFIH1 signaling"/>
</dbReference>
<dbReference type="Proteomes" id="UP000009136">
    <property type="component" value="Chromosome 4"/>
</dbReference>
<dbReference type="Bgee" id="ENSBTAG00000019020">
    <property type="expression patterns" value="Expressed in prostate gland and 107 other cell types or tissues"/>
</dbReference>
<dbReference type="GO" id="GO:0005776">
    <property type="term" value="C:autophagosome"/>
    <property type="evidence" value="ECO:0007669"/>
    <property type="project" value="UniProtKB-SubCell"/>
</dbReference>
<dbReference type="GO" id="GO:0031410">
    <property type="term" value="C:cytoplasmic vesicle"/>
    <property type="evidence" value="ECO:0007669"/>
    <property type="project" value="UniProtKB-KW"/>
</dbReference>
<dbReference type="GO" id="GO:0005739">
    <property type="term" value="C:mitochondrion"/>
    <property type="evidence" value="ECO:0007669"/>
    <property type="project" value="UniProtKB-SubCell"/>
</dbReference>
<dbReference type="GO" id="GO:0000407">
    <property type="term" value="C:phagophore assembly site"/>
    <property type="evidence" value="ECO:0007669"/>
    <property type="project" value="UniProtKB-SubCell"/>
</dbReference>
<dbReference type="GO" id="GO:0019900">
    <property type="term" value="F:kinase binding"/>
    <property type="evidence" value="ECO:0007669"/>
    <property type="project" value="Ensembl"/>
</dbReference>
<dbReference type="GO" id="GO:0030674">
    <property type="term" value="F:protein-macromolecule adaptor activity"/>
    <property type="evidence" value="ECO:0007669"/>
    <property type="project" value="Ensembl"/>
</dbReference>
<dbReference type="GO" id="GO:0008270">
    <property type="term" value="F:zinc ion binding"/>
    <property type="evidence" value="ECO:0007669"/>
    <property type="project" value="UniProtKB-KW"/>
</dbReference>
<dbReference type="GO" id="GO:0006915">
    <property type="term" value="P:apoptotic process"/>
    <property type="evidence" value="ECO:0007669"/>
    <property type="project" value="UniProtKB-KW"/>
</dbReference>
<dbReference type="GO" id="GO:0043066">
    <property type="term" value="P:negative regulation of apoptotic process"/>
    <property type="evidence" value="ECO:0000318"/>
    <property type="project" value="GO_Central"/>
</dbReference>
<dbReference type="GO" id="GO:0039532">
    <property type="term" value="P:negative regulation of cytoplasmic pattern recognition receptor signaling pathway"/>
    <property type="evidence" value="ECO:0007669"/>
    <property type="project" value="Ensembl"/>
</dbReference>
<dbReference type="GO" id="GO:0034144">
    <property type="term" value="P:negative regulation of toll-like receptor 4 signaling pathway"/>
    <property type="evidence" value="ECO:0007669"/>
    <property type="project" value="Ensembl"/>
</dbReference>
<dbReference type="GO" id="GO:1905161">
    <property type="term" value="P:protein localization to phagocytic vesicle"/>
    <property type="evidence" value="ECO:0007669"/>
    <property type="project" value="Ensembl"/>
</dbReference>
<dbReference type="CDD" id="cd21969">
    <property type="entry name" value="Zn-C2H2_TAX1BP1_rpt1"/>
    <property type="match status" value="1"/>
</dbReference>
<dbReference type="CDD" id="cd21970">
    <property type="entry name" value="Zn-C2H2_TAX1BP1_rpt2"/>
    <property type="match status" value="1"/>
</dbReference>
<dbReference type="FunFam" id="2.60.40.2840:FF:000002">
    <property type="entry name" value="Tax1-binding protein 1 isoform 2"/>
    <property type="match status" value="1"/>
</dbReference>
<dbReference type="Gene3D" id="2.60.40.2840">
    <property type="match status" value="1"/>
</dbReference>
<dbReference type="Gene3D" id="6.20.250.40">
    <property type="match status" value="1"/>
</dbReference>
<dbReference type="InterPro" id="IPR012852">
    <property type="entry name" value="CALCOCO1-like"/>
</dbReference>
<dbReference type="InterPro" id="IPR041641">
    <property type="entry name" value="CALCOCO1/2_Zn_UBZ1"/>
</dbReference>
<dbReference type="InterPro" id="IPR041611">
    <property type="entry name" value="SKICH"/>
</dbReference>
<dbReference type="InterPro" id="IPR051002">
    <property type="entry name" value="UBA_autophagy_assoc_protein"/>
</dbReference>
<dbReference type="PANTHER" id="PTHR31915">
    <property type="entry name" value="SKICH DOMAIN-CONTAINING PROTEIN"/>
    <property type="match status" value="1"/>
</dbReference>
<dbReference type="PANTHER" id="PTHR31915:SF8">
    <property type="entry name" value="TAX1-BINDING PROTEIN 1"/>
    <property type="match status" value="1"/>
</dbReference>
<dbReference type="Pfam" id="PF07888">
    <property type="entry name" value="CALCOCO1"/>
    <property type="match status" value="1"/>
</dbReference>
<dbReference type="Pfam" id="PF17751">
    <property type="entry name" value="SKICH"/>
    <property type="match status" value="1"/>
</dbReference>
<dbReference type="Pfam" id="PF18112">
    <property type="entry name" value="Zn-C2H2_12"/>
    <property type="match status" value="2"/>
</dbReference>
<dbReference type="PROSITE" id="PS51905">
    <property type="entry name" value="ZF_UBZ1"/>
    <property type="match status" value="2"/>
</dbReference>